<accession>O14185</accession>
<dbReference type="EMBL" id="CU329670">
    <property type="protein sequence ID" value="CAB11057.1"/>
    <property type="molecule type" value="Genomic_DNA"/>
</dbReference>
<dbReference type="PIR" id="T38839">
    <property type="entry name" value="T38839"/>
</dbReference>
<dbReference type="RefSeq" id="NP_593863.1">
    <property type="nucleotide sequence ID" value="NM_001019292.2"/>
</dbReference>
<dbReference type="SMR" id="O14185"/>
<dbReference type="BioGRID" id="279866">
    <property type="interactions" value="10"/>
</dbReference>
<dbReference type="FunCoup" id="O14185">
    <property type="interactions" value="25"/>
</dbReference>
<dbReference type="MINT" id="O14185"/>
<dbReference type="STRING" id="284812.O14185"/>
<dbReference type="iPTMnet" id="O14185"/>
<dbReference type="PaxDb" id="4896-SPAC4F8.10c.1"/>
<dbReference type="EnsemblFungi" id="SPAC4F8.10c.1">
    <property type="protein sequence ID" value="SPAC4F8.10c.1:pep"/>
    <property type="gene ID" value="SPAC4F8.10c"/>
</dbReference>
<dbReference type="GeneID" id="2543446"/>
<dbReference type="KEGG" id="spo:2543446"/>
<dbReference type="PomBase" id="SPAC4F8.10c">
    <property type="gene designation" value="stg1"/>
</dbReference>
<dbReference type="VEuPathDB" id="FungiDB:SPAC4F8.10c"/>
<dbReference type="eggNOG" id="KOG2046">
    <property type="taxonomic scope" value="Eukaryota"/>
</dbReference>
<dbReference type="HOGENOM" id="CLU_055232_2_1_1"/>
<dbReference type="InParanoid" id="O14185"/>
<dbReference type="OMA" id="WIKTITG"/>
<dbReference type="PhylomeDB" id="O14185"/>
<dbReference type="PRO" id="PR:O14185"/>
<dbReference type="Proteomes" id="UP000002485">
    <property type="component" value="Chromosome I"/>
</dbReference>
<dbReference type="GO" id="GO:0030479">
    <property type="term" value="C:actin cortical patch"/>
    <property type="evidence" value="ECO:0000314"/>
    <property type="project" value="PomBase"/>
</dbReference>
<dbReference type="GO" id="GO:0032153">
    <property type="term" value="C:cell division site"/>
    <property type="evidence" value="ECO:0007005"/>
    <property type="project" value="PomBase"/>
</dbReference>
<dbReference type="GO" id="GO:0051286">
    <property type="term" value="C:cell tip"/>
    <property type="evidence" value="ECO:0007005"/>
    <property type="project" value="PomBase"/>
</dbReference>
<dbReference type="GO" id="GO:0005829">
    <property type="term" value="C:cytosol"/>
    <property type="evidence" value="ECO:0007005"/>
    <property type="project" value="PomBase"/>
</dbReference>
<dbReference type="GO" id="GO:0005634">
    <property type="term" value="C:nucleus"/>
    <property type="evidence" value="ECO:0007005"/>
    <property type="project" value="PomBase"/>
</dbReference>
<dbReference type="GO" id="GO:0051015">
    <property type="term" value="F:actin filament binding"/>
    <property type="evidence" value="ECO:0000314"/>
    <property type="project" value="PomBase"/>
</dbReference>
<dbReference type="GO" id="GO:0051764">
    <property type="term" value="P:actin crosslink formation"/>
    <property type="evidence" value="ECO:0000314"/>
    <property type="project" value="PomBase"/>
</dbReference>
<dbReference type="GO" id="GO:0030036">
    <property type="term" value="P:actin cytoskeleton organization"/>
    <property type="evidence" value="ECO:0000316"/>
    <property type="project" value="PomBase"/>
</dbReference>
<dbReference type="GO" id="GO:0000281">
    <property type="term" value="P:mitotic cytokinesis"/>
    <property type="evidence" value="ECO:0000315"/>
    <property type="project" value="PomBase"/>
</dbReference>
<dbReference type="CDD" id="cd21210">
    <property type="entry name" value="CH_SCP1-like"/>
    <property type="match status" value="1"/>
</dbReference>
<dbReference type="Gene3D" id="1.10.418.10">
    <property type="entry name" value="Calponin-like domain"/>
    <property type="match status" value="1"/>
</dbReference>
<dbReference type="InterPro" id="IPR050606">
    <property type="entry name" value="Calponin-like"/>
</dbReference>
<dbReference type="InterPro" id="IPR001715">
    <property type="entry name" value="CH_dom"/>
</dbReference>
<dbReference type="InterPro" id="IPR036872">
    <property type="entry name" value="CH_dom_sf"/>
</dbReference>
<dbReference type="InterPro" id="IPR003096">
    <property type="entry name" value="SM22_calponin"/>
</dbReference>
<dbReference type="PANTHER" id="PTHR47385">
    <property type="entry name" value="CALPONIN"/>
    <property type="match status" value="1"/>
</dbReference>
<dbReference type="PANTHER" id="PTHR47385:SF14">
    <property type="entry name" value="TRANSGELIN"/>
    <property type="match status" value="1"/>
</dbReference>
<dbReference type="Pfam" id="PF00307">
    <property type="entry name" value="CH"/>
    <property type="match status" value="1"/>
</dbReference>
<dbReference type="PRINTS" id="PR00888">
    <property type="entry name" value="SM22CALPONIN"/>
</dbReference>
<dbReference type="SMART" id="SM00033">
    <property type="entry name" value="CH"/>
    <property type="match status" value="1"/>
</dbReference>
<dbReference type="SUPFAM" id="SSF47576">
    <property type="entry name" value="Calponin-homology domain, CH-domain"/>
    <property type="match status" value="1"/>
</dbReference>
<dbReference type="PROSITE" id="PS50021">
    <property type="entry name" value="CH"/>
    <property type="match status" value="1"/>
</dbReference>
<feature type="chain" id="PRO_0000116661" description="Transgelin">
    <location>
        <begin position="1"/>
        <end position="174"/>
    </location>
</feature>
<feature type="domain" description="Calponin-homology (CH)" evidence="1">
    <location>
        <begin position="3"/>
        <end position="109"/>
    </location>
</feature>
<protein>
    <recommendedName>
        <fullName>Transgelin</fullName>
    </recommendedName>
    <alternativeName>
        <fullName>Calponin homolog 1</fullName>
    </alternativeName>
</protein>
<gene>
    <name type="primary">stg1</name>
    <name type="ORF">SPAC4F8.10c</name>
</gene>
<reference key="1">
    <citation type="journal article" date="2002" name="Nature">
        <title>The genome sequence of Schizosaccharomyces pombe.</title>
        <authorList>
            <person name="Wood V."/>
            <person name="Gwilliam R."/>
            <person name="Rajandream M.A."/>
            <person name="Lyne M.H."/>
            <person name="Lyne R."/>
            <person name="Stewart A."/>
            <person name="Sgouros J.G."/>
            <person name="Peat N."/>
            <person name="Hayles J."/>
            <person name="Baker S.G."/>
            <person name="Basham D."/>
            <person name="Bowman S."/>
            <person name="Brooks K."/>
            <person name="Brown D."/>
            <person name="Brown S."/>
            <person name="Chillingworth T."/>
            <person name="Churcher C.M."/>
            <person name="Collins M."/>
            <person name="Connor R."/>
            <person name="Cronin A."/>
            <person name="Davis P."/>
            <person name="Feltwell T."/>
            <person name="Fraser A."/>
            <person name="Gentles S."/>
            <person name="Goble A."/>
            <person name="Hamlin N."/>
            <person name="Harris D.E."/>
            <person name="Hidalgo J."/>
            <person name="Hodgson G."/>
            <person name="Holroyd S."/>
            <person name="Hornsby T."/>
            <person name="Howarth S."/>
            <person name="Huckle E.J."/>
            <person name="Hunt S."/>
            <person name="Jagels K."/>
            <person name="James K.D."/>
            <person name="Jones L."/>
            <person name="Jones M."/>
            <person name="Leather S."/>
            <person name="McDonald S."/>
            <person name="McLean J."/>
            <person name="Mooney P."/>
            <person name="Moule S."/>
            <person name="Mungall K.L."/>
            <person name="Murphy L.D."/>
            <person name="Niblett D."/>
            <person name="Odell C."/>
            <person name="Oliver K."/>
            <person name="O'Neil S."/>
            <person name="Pearson D."/>
            <person name="Quail M.A."/>
            <person name="Rabbinowitsch E."/>
            <person name="Rutherford K.M."/>
            <person name="Rutter S."/>
            <person name="Saunders D."/>
            <person name="Seeger K."/>
            <person name="Sharp S."/>
            <person name="Skelton J."/>
            <person name="Simmonds M.N."/>
            <person name="Squares R."/>
            <person name="Squares S."/>
            <person name="Stevens K."/>
            <person name="Taylor K."/>
            <person name="Taylor R.G."/>
            <person name="Tivey A."/>
            <person name="Walsh S.V."/>
            <person name="Warren T."/>
            <person name="Whitehead S."/>
            <person name="Woodward J.R."/>
            <person name="Volckaert G."/>
            <person name="Aert R."/>
            <person name="Robben J."/>
            <person name="Grymonprez B."/>
            <person name="Weltjens I."/>
            <person name="Vanstreels E."/>
            <person name="Rieger M."/>
            <person name="Schaefer M."/>
            <person name="Mueller-Auer S."/>
            <person name="Gabel C."/>
            <person name="Fuchs M."/>
            <person name="Duesterhoeft A."/>
            <person name="Fritzc C."/>
            <person name="Holzer E."/>
            <person name="Moestl D."/>
            <person name="Hilbert H."/>
            <person name="Borzym K."/>
            <person name="Langer I."/>
            <person name="Beck A."/>
            <person name="Lehrach H."/>
            <person name="Reinhardt R."/>
            <person name="Pohl T.M."/>
            <person name="Eger P."/>
            <person name="Zimmermann W."/>
            <person name="Wedler H."/>
            <person name="Wambutt R."/>
            <person name="Purnelle B."/>
            <person name="Goffeau A."/>
            <person name="Cadieu E."/>
            <person name="Dreano S."/>
            <person name="Gloux S."/>
            <person name="Lelaure V."/>
            <person name="Mottier S."/>
            <person name="Galibert F."/>
            <person name="Aves S.J."/>
            <person name="Xiang Z."/>
            <person name="Hunt C."/>
            <person name="Moore K."/>
            <person name="Hurst S.M."/>
            <person name="Lucas M."/>
            <person name="Rochet M."/>
            <person name="Gaillardin C."/>
            <person name="Tallada V.A."/>
            <person name="Garzon A."/>
            <person name="Thode G."/>
            <person name="Daga R.R."/>
            <person name="Cruzado L."/>
            <person name="Jimenez J."/>
            <person name="Sanchez M."/>
            <person name="del Rey F."/>
            <person name="Benito J."/>
            <person name="Dominguez A."/>
            <person name="Revuelta J.L."/>
            <person name="Moreno S."/>
            <person name="Armstrong J."/>
            <person name="Forsburg S.L."/>
            <person name="Cerutti L."/>
            <person name="Lowe T."/>
            <person name="McCombie W.R."/>
            <person name="Paulsen I."/>
            <person name="Potashkin J."/>
            <person name="Shpakovski G.V."/>
            <person name="Ussery D."/>
            <person name="Barrell B.G."/>
            <person name="Nurse P."/>
        </authorList>
    </citation>
    <scope>NUCLEOTIDE SEQUENCE [LARGE SCALE GENOMIC DNA]</scope>
    <source>
        <strain>972 / ATCC 24843</strain>
    </source>
</reference>
<reference key="2">
    <citation type="journal article" date="2005" name="FEBS Lett.">
        <title>Stg1 is a novel SM22/transgelin-like actin-modulating protein in fission yeast.</title>
        <authorList>
            <person name="Nakano K."/>
            <person name="Bunai F."/>
            <person name="Numata O."/>
        </authorList>
    </citation>
    <scope>FUNCTION</scope>
    <scope>SUBCELLULAR LOCATION</scope>
</reference>
<reference key="3">
    <citation type="journal article" date="2006" name="Nat. Biotechnol.">
        <title>ORFeome cloning and global analysis of protein localization in the fission yeast Schizosaccharomyces pombe.</title>
        <authorList>
            <person name="Matsuyama A."/>
            <person name="Arai R."/>
            <person name="Yashiroda Y."/>
            <person name="Shirai A."/>
            <person name="Kamata A."/>
            <person name="Sekido S."/>
            <person name="Kobayashi Y."/>
            <person name="Hashimoto A."/>
            <person name="Hamamoto M."/>
            <person name="Hiraoka Y."/>
            <person name="Horinouchi S."/>
            <person name="Yoshida M."/>
        </authorList>
    </citation>
    <scope>SUBCELLULAR LOCATION [LARGE SCALE ANALYSIS]</scope>
</reference>
<comment type="function">
    <text evidence="2">Has actin-binding and actin-bundling activity and is a component of the actin patch. Stabilizes actin filaments against disassembly. Cross-links F-actin and is required for the formation of the contractile F-actin ring.</text>
</comment>
<comment type="subunit">
    <text>Binds to actin.</text>
</comment>
<comment type="subcellular location">
    <subcellularLocation>
        <location evidence="2 3">Cytoplasm</location>
    </subcellularLocation>
    <text>Localizes to the barrier septum.</text>
</comment>
<proteinExistence type="predicted"/>
<organism>
    <name type="scientific">Schizosaccharomyces pombe (strain 972 / ATCC 24843)</name>
    <name type="common">Fission yeast</name>
    <dbReference type="NCBI Taxonomy" id="284812"/>
    <lineage>
        <taxon>Eukaryota</taxon>
        <taxon>Fungi</taxon>
        <taxon>Dikarya</taxon>
        <taxon>Ascomycota</taxon>
        <taxon>Taphrinomycotina</taxon>
        <taxon>Schizosaccharomycetes</taxon>
        <taxon>Schizosaccharomycetales</taxon>
        <taxon>Schizosaccharomycetaceae</taxon>
        <taxon>Schizosaccharomyces</taxon>
    </lineage>
</organism>
<sequence length="174" mass="20141">MTSQLEKEAREWIEETLHTKLNAQLDLLDQLQSGVILCRICKEALGANIRYKESNMPFVQMENISAFINYAQQVVHVPSQDMFQTSDLFERRNDEQVLRSIHSFSRYAAKMFPGKVRGLGPKLAEKKPRVFSAQQQREFREGVNSLQYGSFDMPTQGTEKIAFSRRRDPTGNMY</sequence>
<evidence type="ECO:0000255" key="1">
    <source>
        <dbReference type="PROSITE-ProRule" id="PRU00044"/>
    </source>
</evidence>
<evidence type="ECO:0000269" key="2">
    <source>
    </source>
</evidence>
<evidence type="ECO:0000269" key="3">
    <source>
    </source>
</evidence>
<name>STG1_SCHPO</name>
<keyword id="KW-0963">Cytoplasm</keyword>
<keyword id="KW-1185">Reference proteome</keyword>